<comment type="function">
    <text evidence="1">Aminotransferase that catalyzes the conversion of aromatic amino acids and 2-oxoglutarate into corresponding aromatic oxo acids and L-glutamate.</text>
</comment>
<comment type="catalytic activity">
    <reaction evidence="1">
        <text>an aromatic L-alpha-amino acid + 2-oxoglutarate = an aromatic oxo-acid + L-glutamate</text>
        <dbReference type="Rhea" id="RHEA:17533"/>
        <dbReference type="ChEBI" id="CHEBI:16810"/>
        <dbReference type="ChEBI" id="CHEBI:29985"/>
        <dbReference type="ChEBI" id="CHEBI:73309"/>
        <dbReference type="ChEBI" id="CHEBI:84824"/>
        <dbReference type="EC" id="2.6.1.57"/>
    </reaction>
</comment>
<comment type="cofactor">
    <cofactor evidence="1">
        <name>pyridoxal 5'-phosphate</name>
        <dbReference type="ChEBI" id="CHEBI:597326"/>
    </cofactor>
</comment>
<comment type="subunit">
    <text evidence="1">Homodimer.</text>
</comment>
<comment type="similarity">
    <text evidence="1">Belongs to the class-II pyridoxal-phosphate-dependent aminotransferase family.</text>
</comment>
<evidence type="ECO:0000255" key="1">
    <source>
        <dbReference type="HAMAP-Rule" id="MF_01513"/>
    </source>
</evidence>
<accession>Q1B1Z8</accession>
<name>PATR_MYCSS</name>
<sequence>MTARLRPELADIPAYTPGKTVPGAIKIASNETVHGPLPSVRAAIEKATDQLNRYPDNGYLELREHLASHLDKNLGAGAFTPEQIAVGCGSVSLCQQLIQITSSVGDEVIFAWRSFEIYPLQVRTAGATPVQVPLRDHTHDLDAMLAAITDRTRLIFVCNPNNPTSTVVDPAALKRFVEAVPPHILVVIDEAYVEYIRGDQVPDSFGLVRAHPNVVVLRTFSKAYGLAGLRIGYAVADADIVTALGKVYVPFSATSISQAAAIASIDAADELLARTDQVVAERDRVTAALREAGFTLPPSQSNFVWLPLAERTLDFVRRAAENRLVVRPYGEDGVRVTIAAPHENDAFLEFARNWIGQP</sequence>
<protein>
    <recommendedName>
        <fullName evidence="1">Aromatic amino acid aminotransferase</fullName>
        <shortName evidence="1">ArAT</shortName>
        <ecNumber evidence="1">2.6.1.57</ecNumber>
    </recommendedName>
</protein>
<keyword id="KW-0032">Aminotransferase</keyword>
<keyword id="KW-0663">Pyridoxal phosphate</keyword>
<keyword id="KW-0808">Transferase</keyword>
<feature type="chain" id="PRO_1000024499" description="Aromatic amino acid aminotransferase">
    <location>
        <begin position="1"/>
        <end position="358"/>
    </location>
</feature>
<feature type="modified residue" description="N6-(pyridoxal phosphate)lysine" evidence="1">
    <location>
        <position position="222"/>
    </location>
</feature>
<proteinExistence type="inferred from homology"/>
<gene>
    <name evidence="1" type="primary">pat</name>
    <name type="ordered locus">Mmcs_4982</name>
</gene>
<organism>
    <name type="scientific">Mycobacterium sp. (strain MCS)</name>
    <dbReference type="NCBI Taxonomy" id="164756"/>
    <lineage>
        <taxon>Bacteria</taxon>
        <taxon>Bacillati</taxon>
        <taxon>Actinomycetota</taxon>
        <taxon>Actinomycetes</taxon>
        <taxon>Mycobacteriales</taxon>
        <taxon>Mycobacteriaceae</taxon>
        <taxon>Mycobacterium</taxon>
    </lineage>
</organism>
<dbReference type="EC" id="2.6.1.57" evidence="1"/>
<dbReference type="EMBL" id="CP000384">
    <property type="protein sequence ID" value="ABG11086.1"/>
    <property type="molecule type" value="Genomic_DNA"/>
</dbReference>
<dbReference type="SMR" id="Q1B1Z8"/>
<dbReference type="KEGG" id="mmc:Mmcs_4982"/>
<dbReference type="HOGENOM" id="CLU_017584_3_3_11"/>
<dbReference type="BioCyc" id="MSP164756:G1G6O-5094-MONOMER"/>
<dbReference type="GO" id="GO:0008793">
    <property type="term" value="F:aromatic-amino-acid transaminase activity"/>
    <property type="evidence" value="ECO:0007669"/>
    <property type="project" value="UniProtKB-UniRule"/>
</dbReference>
<dbReference type="GO" id="GO:0004400">
    <property type="term" value="F:histidinol-phosphate transaminase activity"/>
    <property type="evidence" value="ECO:0007669"/>
    <property type="project" value="InterPro"/>
</dbReference>
<dbReference type="GO" id="GO:0030170">
    <property type="term" value="F:pyridoxal phosphate binding"/>
    <property type="evidence" value="ECO:0007669"/>
    <property type="project" value="UniProtKB-UniRule"/>
</dbReference>
<dbReference type="GO" id="GO:0000105">
    <property type="term" value="P:L-histidine biosynthetic process"/>
    <property type="evidence" value="ECO:0007669"/>
    <property type="project" value="InterPro"/>
</dbReference>
<dbReference type="CDD" id="cd00609">
    <property type="entry name" value="AAT_like"/>
    <property type="match status" value="1"/>
</dbReference>
<dbReference type="Gene3D" id="3.90.1150.10">
    <property type="entry name" value="Aspartate Aminotransferase, domain 1"/>
    <property type="match status" value="1"/>
</dbReference>
<dbReference type="Gene3D" id="3.40.640.10">
    <property type="entry name" value="Type I PLP-dependent aspartate aminotransferase-like (Major domain)"/>
    <property type="match status" value="1"/>
</dbReference>
<dbReference type="HAMAP" id="MF_01023">
    <property type="entry name" value="HisC_aminotrans_2"/>
    <property type="match status" value="1"/>
</dbReference>
<dbReference type="HAMAP" id="MF_01513">
    <property type="entry name" value="Phe_aminotrans_2"/>
    <property type="match status" value="1"/>
</dbReference>
<dbReference type="InterPro" id="IPR001917">
    <property type="entry name" value="Aminotrans_II_pyridoxalP_BS"/>
</dbReference>
<dbReference type="InterPro" id="IPR004839">
    <property type="entry name" value="Aminotransferase_I/II_large"/>
</dbReference>
<dbReference type="InterPro" id="IPR024892">
    <property type="entry name" value="ArAT"/>
</dbReference>
<dbReference type="InterPro" id="IPR005861">
    <property type="entry name" value="HisP_aminotrans"/>
</dbReference>
<dbReference type="InterPro" id="IPR050106">
    <property type="entry name" value="HistidinolP_aminotransfase"/>
</dbReference>
<dbReference type="InterPro" id="IPR015424">
    <property type="entry name" value="PyrdxlP-dep_Trfase"/>
</dbReference>
<dbReference type="InterPro" id="IPR015421">
    <property type="entry name" value="PyrdxlP-dep_Trfase_major"/>
</dbReference>
<dbReference type="InterPro" id="IPR015422">
    <property type="entry name" value="PyrdxlP-dep_Trfase_small"/>
</dbReference>
<dbReference type="NCBIfam" id="TIGR01141">
    <property type="entry name" value="hisC"/>
    <property type="match status" value="1"/>
</dbReference>
<dbReference type="NCBIfam" id="NF002878">
    <property type="entry name" value="PRK03321.1"/>
    <property type="match status" value="1"/>
</dbReference>
<dbReference type="PANTHER" id="PTHR43643:SF3">
    <property type="entry name" value="HISTIDINOL-PHOSPHATE AMINOTRANSFERASE"/>
    <property type="match status" value="1"/>
</dbReference>
<dbReference type="PANTHER" id="PTHR43643">
    <property type="entry name" value="HISTIDINOL-PHOSPHATE AMINOTRANSFERASE 2"/>
    <property type="match status" value="1"/>
</dbReference>
<dbReference type="Pfam" id="PF00155">
    <property type="entry name" value="Aminotran_1_2"/>
    <property type="match status" value="1"/>
</dbReference>
<dbReference type="SUPFAM" id="SSF53383">
    <property type="entry name" value="PLP-dependent transferases"/>
    <property type="match status" value="1"/>
</dbReference>
<dbReference type="PROSITE" id="PS00599">
    <property type="entry name" value="AA_TRANSFER_CLASS_2"/>
    <property type="match status" value="1"/>
</dbReference>
<reference key="1">
    <citation type="submission" date="2006-06" db="EMBL/GenBank/DDBJ databases">
        <title>Complete sequence of chromosome of Mycobacterium sp. MCS.</title>
        <authorList>
            <consortium name="US DOE Joint Genome Institute"/>
            <person name="Copeland A."/>
            <person name="Lucas S."/>
            <person name="Lapidus A."/>
            <person name="Barry K."/>
            <person name="Detter J.C."/>
            <person name="Glavina del Rio T."/>
            <person name="Hammon N."/>
            <person name="Israni S."/>
            <person name="Dalin E."/>
            <person name="Tice H."/>
            <person name="Pitluck S."/>
            <person name="Martinez M."/>
            <person name="Schmutz J."/>
            <person name="Larimer F."/>
            <person name="Land M."/>
            <person name="Hauser L."/>
            <person name="Kyrpides N."/>
            <person name="Kim E."/>
            <person name="Miller C.D."/>
            <person name="Hughes J.E."/>
            <person name="Anderson A.J."/>
            <person name="Sims R.C."/>
            <person name="Richardson P."/>
        </authorList>
    </citation>
    <scope>NUCLEOTIDE SEQUENCE [LARGE SCALE GENOMIC DNA]</scope>
    <source>
        <strain>MCS</strain>
    </source>
</reference>